<gene>
    <name evidence="1" type="primary">erpA</name>
    <name type="ordered locus">SSON_0168</name>
</gene>
<sequence>MSDDVALPLEFTDAAANKVKSLIADEDNPNLKLRVYITGGGCSGFQYGFTFDDQVNEGDMTIEKQGVGLVVDPMSLQYLVGGSVDYTEGLEGSRFIVTNPNAKSTCGCGSSFSI</sequence>
<keyword id="KW-0408">Iron</keyword>
<keyword id="KW-0411">Iron-sulfur</keyword>
<keyword id="KW-0479">Metal-binding</keyword>
<keyword id="KW-1185">Reference proteome</keyword>
<organism>
    <name type="scientific">Shigella sonnei (strain Ss046)</name>
    <dbReference type="NCBI Taxonomy" id="300269"/>
    <lineage>
        <taxon>Bacteria</taxon>
        <taxon>Pseudomonadati</taxon>
        <taxon>Pseudomonadota</taxon>
        <taxon>Gammaproteobacteria</taxon>
        <taxon>Enterobacterales</taxon>
        <taxon>Enterobacteriaceae</taxon>
        <taxon>Shigella</taxon>
    </lineage>
</organism>
<proteinExistence type="inferred from homology"/>
<accession>Q3Z5K1</accession>
<feature type="chain" id="PRO_0000311562" description="Iron-sulfur cluster insertion protein ErpA">
    <location>
        <begin position="1"/>
        <end position="114"/>
    </location>
</feature>
<feature type="binding site" evidence="1">
    <location>
        <position position="42"/>
    </location>
    <ligand>
        <name>iron-sulfur cluster</name>
        <dbReference type="ChEBI" id="CHEBI:30408"/>
    </ligand>
</feature>
<feature type="binding site" evidence="1">
    <location>
        <position position="106"/>
    </location>
    <ligand>
        <name>iron-sulfur cluster</name>
        <dbReference type="ChEBI" id="CHEBI:30408"/>
    </ligand>
</feature>
<feature type="binding site" evidence="1">
    <location>
        <position position="108"/>
    </location>
    <ligand>
        <name>iron-sulfur cluster</name>
        <dbReference type="ChEBI" id="CHEBI:30408"/>
    </ligand>
</feature>
<protein>
    <recommendedName>
        <fullName evidence="1">Iron-sulfur cluster insertion protein ErpA</fullName>
    </recommendedName>
</protein>
<dbReference type="EMBL" id="CP000038">
    <property type="protein sequence ID" value="AAZ86961.1"/>
    <property type="molecule type" value="Genomic_DNA"/>
</dbReference>
<dbReference type="RefSeq" id="WP_001295564.1">
    <property type="nucleotide sequence ID" value="NC_007384.1"/>
</dbReference>
<dbReference type="SMR" id="Q3Z5K1"/>
<dbReference type="GeneID" id="93777270"/>
<dbReference type="KEGG" id="ssn:SSON_0168"/>
<dbReference type="HOGENOM" id="CLU_069054_5_3_6"/>
<dbReference type="Proteomes" id="UP000002529">
    <property type="component" value="Chromosome"/>
</dbReference>
<dbReference type="GO" id="GO:0005829">
    <property type="term" value="C:cytosol"/>
    <property type="evidence" value="ECO:0007669"/>
    <property type="project" value="TreeGrafter"/>
</dbReference>
<dbReference type="GO" id="GO:0051537">
    <property type="term" value="F:2 iron, 2 sulfur cluster binding"/>
    <property type="evidence" value="ECO:0007669"/>
    <property type="project" value="TreeGrafter"/>
</dbReference>
<dbReference type="GO" id="GO:0051539">
    <property type="term" value="F:4 iron, 4 sulfur cluster binding"/>
    <property type="evidence" value="ECO:0007669"/>
    <property type="project" value="TreeGrafter"/>
</dbReference>
<dbReference type="GO" id="GO:0005506">
    <property type="term" value="F:iron ion binding"/>
    <property type="evidence" value="ECO:0007669"/>
    <property type="project" value="UniProtKB-UniRule"/>
</dbReference>
<dbReference type="GO" id="GO:0016226">
    <property type="term" value="P:iron-sulfur cluster assembly"/>
    <property type="evidence" value="ECO:0007669"/>
    <property type="project" value="UniProtKB-UniRule"/>
</dbReference>
<dbReference type="FunFam" id="2.60.300.12:FF:000002">
    <property type="entry name" value="Iron-sulfur cluster insertion protein ErpA"/>
    <property type="match status" value="1"/>
</dbReference>
<dbReference type="Gene3D" id="2.60.300.12">
    <property type="entry name" value="HesB-like domain"/>
    <property type="match status" value="1"/>
</dbReference>
<dbReference type="HAMAP" id="MF_01380">
    <property type="entry name" value="Fe_S_insert_ErpA"/>
    <property type="match status" value="1"/>
</dbReference>
<dbReference type="InterPro" id="IPR000361">
    <property type="entry name" value="FeS_biogenesis"/>
</dbReference>
<dbReference type="InterPro" id="IPR016092">
    <property type="entry name" value="FeS_cluster_insertion"/>
</dbReference>
<dbReference type="InterPro" id="IPR017870">
    <property type="entry name" value="FeS_cluster_insertion_CS"/>
</dbReference>
<dbReference type="InterPro" id="IPR023063">
    <property type="entry name" value="FeS_cluster_insertion_RrpA"/>
</dbReference>
<dbReference type="InterPro" id="IPR035903">
    <property type="entry name" value="HesB-like_dom_sf"/>
</dbReference>
<dbReference type="NCBIfam" id="TIGR00049">
    <property type="entry name" value="iron-sulfur cluster assembly accessory protein"/>
    <property type="match status" value="1"/>
</dbReference>
<dbReference type="NCBIfam" id="NF010147">
    <property type="entry name" value="PRK13623.1"/>
    <property type="match status" value="1"/>
</dbReference>
<dbReference type="PANTHER" id="PTHR43011">
    <property type="entry name" value="IRON-SULFUR CLUSTER ASSEMBLY 2 HOMOLOG, MITOCHONDRIAL"/>
    <property type="match status" value="1"/>
</dbReference>
<dbReference type="PANTHER" id="PTHR43011:SF1">
    <property type="entry name" value="IRON-SULFUR CLUSTER ASSEMBLY 2 HOMOLOG, MITOCHONDRIAL"/>
    <property type="match status" value="1"/>
</dbReference>
<dbReference type="Pfam" id="PF01521">
    <property type="entry name" value="Fe-S_biosyn"/>
    <property type="match status" value="1"/>
</dbReference>
<dbReference type="SUPFAM" id="SSF89360">
    <property type="entry name" value="HesB-like domain"/>
    <property type="match status" value="1"/>
</dbReference>
<dbReference type="PROSITE" id="PS01152">
    <property type="entry name" value="HESB"/>
    <property type="match status" value="1"/>
</dbReference>
<name>ERPA_SHISS</name>
<evidence type="ECO:0000255" key="1">
    <source>
        <dbReference type="HAMAP-Rule" id="MF_01380"/>
    </source>
</evidence>
<comment type="function">
    <text evidence="1">Required for insertion of 4Fe-4S clusters for at least IspG.</text>
</comment>
<comment type="cofactor">
    <cofactor evidence="1">
        <name>iron-sulfur cluster</name>
        <dbReference type="ChEBI" id="CHEBI:30408"/>
    </cofactor>
    <text evidence="1">Binds 1 iron-sulfur cluster per subunit.</text>
</comment>
<comment type="subunit">
    <text evidence="1">Homodimer.</text>
</comment>
<comment type="similarity">
    <text evidence="1">Belongs to the HesB/IscA family.</text>
</comment>
<reference key="1">
    <citation type="journal article" date="2005" name="Nucleic Acids Res.">
        <title>Genome dynamics and diversity of Shigella species, the etiologic agents of bacillary dysentery.</title>
        <authorList>
            <person name="Yang F."/>
            <person name="Yang J."/>
            <person name="Zhang X."/>
            <person name="Chen L."/>
            <person name="Jiang Y."/>
            <person name="Yan Y."/>
            <person name="Tang X."/>
            <person name="Wang J."/>
            <person name="Xiong Z."/>
            <person name="Dong J."/>
            <person name="Xue Y."/>
            <person name="Zhu Y."/>
            <person name="Xu X."/>
            <person name="Sun L."/>
            <person name="Chen S."/>
            <person name="Nie H."/>
            <person name="Peng J."/>
            <person name="Xu J."/>
            <person name="Wang Y."/>
            <person name="Yuan Z."/>
            <person name="Wen Y."/>
            <person name="Yao Z."/>
            <person name="Shen Y."/>
            <person name="Qiang B."/>
            <person name="Hou Y."/>
            <person name="Yu J."/>
            <person name="Jin Q."/>
        </authorList>
    </citation>
    <scope>NUCLEOTIDE SEQUENCE [LARGE SCALE GENOMIC DNA]</scope>
    <source>
        <strain>Ss046</strain>
    </source>
</reference>